<accession>A4VY70</accession>
<organism>
    <name type="scientific">Streptococcus suis (strain 05ZYH33)</name>
    <dbReference type="NCBI Taxonomy" id="391295"/>
    <lineage>
        <taxon>Bacteria</taxon>
        <taxon>Bacillati</taxon>
        <taxon>Bacillota</taxon>
        <taxon>Bacilli</taxon>
        <taxon>Lactobacillales</taxon>
        <taxon>Streptococcaceae</taxon>
        <taxon>Streptococcus</taxon>
    </lineage>
</organism>
<protein>
    <recommendedName>
        <fullName evidence="1">D-aminoacyl-tRNA deacylase</fullName>
        <shortName evidence="1">DTD</shortName>
        <ecNumber evidence="1">3.1.1.96</ecNumber>
    </recommendedName>
    <alternativeName>
        <fullName evidence="1">Gly-tRNA(Ala) deacylase</fullName>
    </alternativeName>
</protein>
<keyword id="KW-0963">Cytoplasm</keyword>
<keyword id="KW-0378">Hydrolase</keyword>
<keyword id="KW-0694">RNA-binding</keyword>
<keyword id="KW-0820">tRNA-binding</keyword>
<reference key="1">
    <citation type="journal article" date="2007" name="PLoS ONE">
        <title>A glimpse of streptococcal toxic shock syndrome from comparative genomics of S. suis 2 Chinese isolates.</title>
        <authorList>
            <person name="Chen C."/>
            <person name="Tang J."/>
            <person name="Dong W."/>
            <person name="Wang C."/>
            <person name="Feng Y."/>
            <person name="Wang J."/>
            <person name="Zheng F."/>
            <person name="Pan X."/>
            <person name="Liu D."/>
            <person name="Li M."/>
            <person name="Song Y."/>
            <person name="Zhu X."/>
            <person name="Sun H."/>
            <person name="Feng T."/>
            <person name="Guo Z."/>
            <person name="Ju A."/>
            <person name="Ge J."/>
            <person name="Dong Y."/>
            <person name="Sun W."/>
            <person name="Jiang Y."/>
            <person name="Wang J."/>
            <person name="Yan J."/>
            <person name="Yang H."/>
            <person name="Wang X."/>
            <person name="Gao G.F."/>
            <person name="Yang R."/>
            <person name="Wang J."/>
            <person name="Yu J."/>
        </authorList>
    </citation>
    <scope>NUCLEOTIDE SEQUENCE [LARGE SCALE GENOMIC DNA]</scope>
    <source>
        <strain>05ZYH33</strain>
    </source>
</reference>
<feature type="chain" id="PRO_1000050897" description="D-aminoacyl-tRNA deacylase">
    <location>
        <begin position="1"/>
        <end position="147"/>
    </location>
</feature>
<feature type="short sequence motif" description="Gly-cisPro motif, important for rejection of L-amino acids" evidence="1">
    <location>
        <begin position="136"/>
        <end position="137"/>
    </location>
</feature>
<evidence type="ECO:0000255" key="1">
    <source>
        <dbReference type="HAMAP-Rule" id="MF_00518"/>
    </source>
</evidence>
<gene>
    <name evidence="1" type="primary">dtd</name>
    <name type="ordered locus">SSU05_2093</name>
</gene>
<comment type="function">
    <text evidence="1">An aminoacyl-tRNA editing enzyme that deacylates mischarged D-aminoacyl-tRNAs. Also deacylates mischarged glycyl-tRNA(Ala), protecting cells against glycine mischarging by AlaRS. Acts via tRNA-based rather than protein-based catalysis; rejects L-amino acids rather than detecting D-amino acids in the active site. By recycling D-aminoacyl-tRNA to D-amino acids and free tRNA molecules, this enzyme counteracts the toxicity associated with the formation of D-aminoacyl-tRNA entities in vivo and helps enforce protein L-homochirality.</text>
</comment>
<comment type="catalytic activity">
    <reaction evidence="1">
        <text>glycyl-tRNA(Ala) + H2O = tRNA(Ala) + glycine + H(+)</text>
        <dbReference type="Rhea" id="RHEA:53744"/>
        <dbReference type="Rhea" id="RHEA-COMP:9657"/>
        <dbReference type="Rhea" id="RHEA-COMP:13640"/>
        <dbReference type="ChEBI" id="CHEBI:15377"/>
        <dbReference type="ChEBI" id="CHEBI:15378"/>
        <dbReference type="ChEBI" id="CHEBI:57305"/>
        <dbReference type="ChEBI" id="CHEBI:78442"/>
        <dbReference type="ChEBI" id="CHEBI:78522"/>
        <dbReference type="EC" id="3.1.1.96"/>
    </reaction>
</comment>
<comment type="catalytic activity">
    <reaction evidence="1">
        <text>a D-aminoacyl-tRNA + H2O = a tRNA + a D-alpha-amino acid + H(+)</text>
        <dbReference type="Rhea" id="RHEA:13953"/>
        <dbReference type="Rhea" id="RHEA-COMP:10123"/>
        <dbReference type="Rhea" id="RHEA-COMP:10124"/>
        <dbReference type="ChEBI" id="CHEBI:15377"/>
        <dbReference type="ChEBI" id="CHEBI:15378"/>
        <dbReference type="ChEBI" id="CHEBI:59871"/>
        <dbReference type="ChEBI" id="CHEBI:78442"/>
        <dbReference type="ChEBI" id="CHEBI:79333"/>
        <dbReference type="EC" id="3.1.1.96"/>
    </reaction>
</comment>
<comment type="subunit">
    <text evidence="1">Homodimer.</text>
</comment>
<comment type="subcellular location">
    <subcellularLocation>
        <location evidence="1">Cytoplasm</location>
    </subcellularLocation>
</comment>
<comment type="domain">
    <text evidence="1">A Gly-cisPro motif from one monomer fits into the active site of the other monomer to allow specific chiral rejection of L-amino acids.</text>
</comment>
<comment type="similarity">
    <text evidence="1">Belongs to the DTD family.</text>
</comment>
<proteinExistence type="inferred from homology"/>
<dbReference type="EC" id="3.1.1.96" evidence="1"/>
<dbReference type="EMBL" id="CP000407">
    <property type="protein sequence ID" value="ABP91059.1"/>
    <property type="molecule type" value="Genomic_DNA"/>
</dbReference>
<dbReference type="SMR" id="A4VY70"/>
<dbReference type="STRING" id="391295.SSU05_2093"/>
<dbReference type="KEGG" id="ssu:SSU05_2093"/>
<dbReference type="eggNOG" id="COG1490">
    <property type="taxonomic scope" value="Bacteria"/>
</dbReference>
<dbReference type="HOGENOM" id="CLU_076901_1_0_9"/>
<dbReference type="GO" id="GO:0005737">
    <property type="term" value="C:cytoplasm"/>
    <property type="evidence" value="ECO:0007669"/>
    <property type="project" value="UniProtKB-SubCell"/>
</dbReference>
<dbReference type="GO" id="GO:0051500">
    <property type="term" value="F:D-tyrosyl-tRNA(Tyr) deacylase activity"/>
    <property type="evidence" value="ECO:0007669"/>
    <property type="project" value="TreeGrafter"/>
</dbReference>
<dbReference type="GO" id="GO:0106026">
    <property type="term" value="F:Gly-tRNA(Ala) deacylase activity"/>
    <property type="evidence" value="ECO:0007669"/>
    <property type="project" value="UniProtKB-UniRule"/>
</dbReference>
<dbReference type="GO" id="GO:0043908">
    <property type="term" value="F:Ser(Gly)-tRNA(Ala) hydrolase activity"/>
    <property type="evidence" value="ECO:0007669"/>
    <property type="project" value="UniProtKB-UniRule"/>
</dbReference>
<dbReference type="GO" id="GO:0000049">
    <property type="term" value="F:tRNA binding"/>
    <property type="evidence" value="ECO:0007669"/>
    <property type="project" value="UniProtKB-UniRule"/>
</dbReference>
<dbReference type="GO" id="GO:0019478">
    <property type="term" value="P:D-amino acid catabolic process"/>
    <property type="evidence" value="ECO:0007669"/>
    <property type="project" value="UniProtKB-UniRule"/>
</dbReference>
<dbReference type="CDD" id="cd00563">
    <property type="entry name" value="Dtyr_deacylase"/>
    <property type="match status" value="1"/>
</dbReference>
<dbReference type="FunFam" id="3.50.80.10:FF:000001">
    <property type="entry name" value="D-aminoacyl-tRNA deacylase"/>
    <property type="match status" value="1"/>
</dbReference>
<dbReference type="Gene3D" id="3.50.80.10">
    <property type="entry name" value="D-tyrosyl-tRNA(Tyr) deacylase"/>
    <property type="match status" value="1"/>
</dbReference>
<dbReference type="HAMAP" id="MF_00518">
    <property type="entry name" value="Deacylase_Dtd"/>
    <property type="match status" value="1"/>
</dbReference>
<dbReference type="InterPro" id="IPR003732">
    <property type="entry name" value="Daa-tRNA_deacyls_DTD"/>
</dbReference>
<dbReference type="InterPro" id="IPR023509">
    <property type="entry name" value="DTD-like_sf"/>
</dbReference>
<dbReference type="NCBIfam" id="TIGR00256">
    <property type="entry name" value="D-aminoacyl-tRNA deacylase"/>
    <property type="match status" value="1"/>
</dbReference>
<dbReference type="PANTHER" id="PTHR10472:SF5">
    <property type="entry name" value="D-AMINOACYL-TRNA DEACYLASE 1"/>
    <property type="match status" value="1"/>
</dbReference>
<dbReference type="PANTHER" id="PTHR10472">
    <property type="entry name" value="D-TYROSYL-TRNA TYR DEACYLASE"/>
    <property type="match status" value="1"/>
</dbReference>
<dbReference type="Pfam" id="PF02580">
    <property type="entry name" value="Tyr_Deacylase"/>
    <property type="match status" value="1"/>
</dbReference>
<dbReference type="SUPFAM" id="SSF69500">
    <property type="entry name" value="DTD-like"/>
    <property type="match status" value="1"/>
</dbReference>
<sequence length="147" mass="15611">MKIVLQRVSQASVTIEGSIHGQIEQGLLLLVGVGPDDSQEDLDYAVRKIVNMRIFSDEAGKMNKSVQDVAGKILSISQFTLFADTKKGNRPAFTGAAAPALASQLYDAFNQALSAFVPVEVGVFGADMAVSLVNDGPVTIVLDTKNK</sequence>
<name>DTD_STRSY</name>